<proteinExistence type="inferred from homology"/>
<dbReference type="EMBL" id="CP000049">
    <property type="protein sequence ID" value="AAX17716.1"/>
    <property type="molecule type" value="Genomic_DNA"/>
</dbReference>
<dbReference type="RefSeq" id="WP_011772335.1">
    <property type="nucleotide sequence ID" value="NZ_CP073176.1"/>
</dbReference>
<dbReference type="SMR" id="A1QZH4"/>
<dbReference type="KEGG" id="btu:BT0386"/>
<dbReference type="eggNOG" id="COG0049">
    <property type="taxonomic scope" value="Bacteria"/>
</dbReference>
<dbReference type="HOGENOM" id="CLU_072226_1_1_12"/>
<dbReference type="Proteomes" id="UP000001205">
    <property type="component" value="Chromosome"/>
</dbReference>
<dbReference type="GO" id="GO:0015935">
    <property type="term" value="C:small ribosomal subunit"/>
    <property type="evidence" value="ECO:0007669"/>
    <property type="project" value="InterPro"/>
</dbReference>
<dbReference type="GO" id="GO:0019843">
    <property type="term" value="F:rRNA binding"/>
    <property type="evidence" value="ECO:0007669"/>
    <property type="project" value="UniProtKB-UniRule"/>
</dbReference>
<dbReference type="GO" id="GO:0003735">
    <property type="term" value="F:structural constituent of ribosome"/>
    <property type="evidence" value="ECO:0007669"/>
    <property type="project" value="InterPro"/>
</dbReference>
<dbReference type="GO" id="GO:0000049">
    <property type="term" value="F:tRNA binding"/>
    <property type="evidence" value="ECO:0007669"/>
    <property type="project" value="UniProtKB-UniRule"/>
</dbReference>
<dbReference type="GO" id="GO:0006412">
    <property type="term" value="P:translation"/>
    <property type="evidence" value="ECO:0007669"/>
    <property type="project" value="UniProtKB-UniRule"/>
</dbReference>
<dbReference type="CDD" id="cd14869">
    <property type="entry name" value="uS7_Bacteria"/>
    <property type="match status" value="1"/>
</dbReference>
<dbReference type="FunFam" id="1.10.455.10:FF:000001">
    <property type="entry name" value="30S ribosomal protein S7"/>
    <property type="match status" value="1"/>
</dbReference>
<dbReference type="Gene3D" id="1.10.455.10">
    <property type="entry name" value="Ribosomal protein S7 domain"/>
    <property type="match status" value="1"/>
</dbReference>
<dbReference type="HAMAP" id="MF_00480_B">
    <property type="entry name" value="Ribosomal_uS7_B"/>
    <property type="match status" value="1"/>
</dbReference>
<dbReference type="InterPro" id="IPR000235">
    <property type="entry name" value="Ribosomal_uS7"/>
</dbReference>
<dbReference type="InterPro" id="IPR005717">
    <property type="entry name" value="Ribosomal_uS7_bac/org-type"/>
</dbReference>
<dbReference type="InterPro" id="IPR020606">
    <property type="entry name" value="Ribosomal_uS7_CS"/>
</dbReference>
<dbReference type="InterPro" id="IPR023798">
    <property type="entry name" value="Ribosomal_uS7_dom"/>
</dbReference>
<dbReference type="InterPro" id="IPR036823">
    <property type="entry name" value="Ribosomal_uS7_dom_sf"/>
</dbReference>
<dbReference type="NCBIfam" id="TIGR01029">
    <property type="entry name" value="rpsG_bact"/>
    <property type="match status" value="1"/>
</dbReference>
<dbReference type="PANTHER" id="PTHR11205">
    <property type="entry name" value="RIBOSOMAL PROTEIN S7"/>
    <property type="match status" value="1"/>
</dbReference>
<dbReference type="Pfam" id="PF00177">
    <property type="entry name" value="Ribosomal_S7"/>
    <property type="match status" value="1"/>
</dbReference>
<dbReference type="PIRSF" id="PIRSF002122">
    <property type="entry name" value="RPS7p_RPS7a_RPS5e_RPS7o"/>
    <property type="match status" value="1"/>
</dbReference>
<dbReference type="SUPFAM" id="SSF47973">
    <property type="entry name" value="Ribosomal protein S7"/>
    <property type="match status" value="1"/>
</dbReference>
<dbReference type="PROSITE" id="PS00052">
    <property type="entry name" value="RIBOSOMAL_S7"/>
    <property type="match status" value="1"/>
</dbReference>
<accession>A1QZH4</accession>
<keyword id="KW-1185">Reference proteome</keyword>
<keyword id="KW-0687">Ribonucleoprotein</keyword>
<keyword id="KW-0689">Ribosomal protein</keyword>
<keyword id="KW-0694">RNA-binding</keyword>
<keyword id="KW-0699">rRNA-binding</keyword>
<keyword id="KW-0820">tRNA-binding</keyword>
<feature type="chain" id="PRO_1000135582" description="Small ribosomal subunit protein uS7">
    <location>
        <begin position="1"/>
        <end position="157"/>
    </location>
</feature>
<organism>
    <name type="scientific">Borrelia turicatae (strain 91E135)</name>
    <dbReference type="NCBI Taxonomy" id="314724"/>
    <lineage>
        <taxon>Bacteria</taxon>
        <taxon>Pseudomonadati</taxon>
        <taxon>Spirochaetota</taxon>
        <taxon>Spirochaetia</taxon>
        <taxon>Spirochaetales</taxon>
        <taxon>Borreliaceae</taxon>
        <taxon>Borrelia</taxon>
    </lineage>
</organism>
<sequence>MSRKSKKIKKKVFKDSKYDSQVIAKFVNRMMYDGKKSISEAIVYNSIDLLAEKTEEVDKVAAFSKALDNVKPLVEVRSRRVGGATYQVPVEVREERREALAMKWIIAAARKASGKSMQEKLGNELVNSYNSTGVAFKKREDTHRMAEANRAFTHYRW</sequence>
<evidence type="ECO:0000255" key="1">
    <source>
        <dbReference type="HAMAP-Rule" id="MF_00480"/>
    </source>
</evidence>
<evidence type="ECO:0000305" key="2"/>
<protein>
    <recommendedName>
        <fullName evidence="1">Small ribosomal subunit protein uS7</fullName>
    </recommendedName>
    <alternativeName>
        <fullName evidence="2">30S ribosomal protein S7</fullName>
    </alternativeName>
</protein>
<gene>
    <name evidence="1" type="primary">rpsG</name>
    <name type="ordered locus">BT0386</name>
</gene>
<reference key="1">
    <citation type="submission" date="2004-12" db="EMBL/GenBank/DDBJ databases">
        <title>The genome sequence of Borrelia hermsii and Borrelia turicatae: comparative analysis of two agents of endemic N. America relapsing fever.</title>
        <authorList>
            <person name="Porcella S.F."/>
            <person name="Raffel S.J."/>
            <person name="Schrumpf M.E."/>
            <person name="Montgomery B."/>
            <person name="Smith T."/>
            <person name="Schwan T.G."/>
        </authorList>
    </citation>
    <scope>NUCLEOTIDE SEQUENCE [LARGE SCALE GENOMIC DNA]</scope>
    <source>
        <strain>91E135</strain>
    </source>
</reference>
<comment type="function">
    <text evidence="1">One of the primary rRNA binding proteins, it binds directly to 16S rRNA where it nucleates assembly of the head domain of the 30S subunit. Is located at the subunit interface close to the decoding center, probably blocks exit of the E-site tRNA.</text>
</comment>
<comment type="subunit">
    <text evidence="1">Part of the 30S ribosomal subunit. Contacts proteins S9 and S11.</text>
</comment>
<comment type="similarity">
    <text evidence="1">Belongs to the universal ribosomal protein uS7 family.</text>
</comment>
<name>RS7_BORT9</name>